<accession>Q7VP78</accession>
<evidence type="ECO:0000255" key="1">
    <source>
        <dbReference type="HAMAP-Rule" id="MF_00444"/>
    </source>
</evidence>
<comment type="function">
    <text evidence="1">Cleaves peptides in various proteins in a process that requires ATP hydrolysis. Has a chymotrypsin-like activity. Plays a major role in the degradation of misfolded proteins.</text>
</comment>
<comment type="catalytic activity">
    <reaction evidence="1">
        <text>Hydrolysis of proteins to small peptides in the presence of ATP and magnesium. alpha-casein is the usual test substrate. In the absence of ATP, only oligopeptides shorter than five residues are hydrolyzed (such as succinyl-Leu-Tyr-|-NHMec, and Leu-Tyr-Leu-|-Tyr-Trp, in which cleavage of the -Tyr-|-Leu- and -Tyr-|-Trp bonds also occurs).</text>
        <dbReference type="EC" id="3.4.21.92"/>
    </reaction>
</comment>
<comment type="subunit">
    <text evidence="1">Fourteen ClpP subunits assemble into 2 heptameric rings which stack back to back to give a disk-like structure with a central cavity, resembling the structure of eukaryotic proteasomes.</text>
</comment>
<comment type="subcellular location">
    <subcellularLocation>
        <location evidence="1">Cytoplasm</location>
    </subcellularLocation>
</comment>
<comment type="similarity">
    <text evidence="1">Belongs to the peptidase S14 family.</text>
</comment>
<feature type="chain" id="PRO_0000179565" description="ATP-dependent Clp protease proteolytic subunit">
    <location>
        <begin position="1"/>
        <end position="197"/>
    </location>
</feature>
<feature type="active site" description="Nucleophile" evidence="1">
    <location>
        <position position="98"/>
    </location>
</feature>
<feature type="active site" evidence="1">
    <location>
        <position position="123"/>
    </location>
</feature>
<proteinExistence type="inferred from homology"/>
<keyword id="KW-0963">Cytoplasm</keyword>
<keyword id="KW-0378">Hydrolase</keyword>
<keyword id="KW-0645">Protease</keyword>
<keyword id="KW-1185">Reference proteome</keyword>
<keyword id="KW-0720">Serine protease</keyword>
<dbReference type="EC" id="3.4.21.92" evidence="1"/>
<dbReference type="EMBL" id="AE017143">
    <property type="protein sequence ID" value="AAP95209.1"/>
    <property type="molecule type" value="Genomic_DNA"/>
</dbReference>
<dbReference type="RefSeq" id="WP_010944262.1">
    <property type="nucleotide sequence ID" value="NC_002940.2"/>
</dbReference>
<dbReference type="SMR" id="Q7VP78"/>
<dbReference type="STRING" id="233412.HD_0221"/>
<dbReference type="MEROPS" id="S14.001"/>
<dbReference type="GeneID" id="60733322"/>
<dbReference type="KEGG" id="hdu:HD_0221"/>
<dbReference type="eggNOG" id="COG0740">
    <property type="taxonomic scope" value="Bacteria"/>
</dbReference>
<dbReference type="HOGENOM" id="CLU_058707_3_2_6"/>
<dbReference type="OrthoDB" id="9802800at2"/>
<dbReference type="Proteomes" id="UP000001022">
    <property type="component" value="Chromosome"/>
</dbReference>
<dbReference type="GO" id="GO:0005737">
    <property type="term" value="C:cytoplasm"/>
    <property type="evidence" value="ECO:0007669"/>
    <property type="project" value="UniProtKB-SubCell"/>
</dbReference>
<dbReference type="GO" id="GO:0009368">
    <property type="term" value="C:endopeptidase Clp complex"/>
    <property type="evidence" value="ECO:0007669"/>
    <property type="project" value="TreeGrafter"/>
</dbReference>
<dbReference type="GO" id="GO:0004176">
    <property type="term" value="F:ATP-dependent peptidase activity"/>
    <property type="evidence" value="ECO:0007669"/>
    <property type="project" value="InterPro"/>
</dbReference>
<dbReference type="GO" id="GO:0051117">
    <property type="term" value="F:ATPase binding"/>
    <property type="evidence" value="ECO:0007669"/>
    <property type="project" value="TreeGrafter"/>
</dbReference>
<dbReference type="GO" id="GO:0004252">
    <property type="term" value="F:serine-type endopeptidase activity"/>
    <property type="evidence" value="ECO:0007669"/>
    <property type="project" value="UniProtKB-UniRule"/>
</dbReference>
<dbReference type="GO" id="GO:0006515">
    <property type="term" value="P:protein quality control for misfolded or incompletely synthesized proteins"/>
    <property type="evidence" value="ECO:0007669"/>
    <property type="project" value="TreeGrafter"/>
</dbReference>
<dbReference type="CDD" id="cd07017">
    <property type="entry name" value="S14_ClpP_2"/>
    <property type="match status" value="1"/>
</dbReference>
<dbReference type="FunFam" id="3.90.226.10:FF:000001">
    <property type="entry name" value="ATP-dependent Clp protease proteolytic subunit"/>
    <property type="match status" value="1"/>
</dbReference>
<dbReference type="Gene3D" id="3.90.226.10">
    <property type="entry name" value="2-enoyl-CoA Hydratase, Chain A, domain 1"/>
    <property type="match status" value="1"/>
</dbReference>
<dbReference type="HAMAP" id="MF_00444">
    <property type="entry name" value="ClpP"/>
    <property type="match status" value="1"/>
</dbReference>
<dbReference type="InterPro" id="IPR001907">
    <property type="entry name" value="ClpP"/>
</dbReference>
<dbReference type="InterPro" id="IPR029045">
    <property type="entry name" value="ClpP/crotonase-like_dom_sf"/>
</dbReference>
<dbReference type="InterPro" id="IPR023562">
    <property type="entry name" value="ClpP/TepA"/>
</dbReference>
<dbReference type="InterPro" id="IPR033135">
    <property type="entry name" value="ClpP_His_AS"/>
</dbReference>
<dbReference type="NCBIfam" id="TIGR00493">
    <property type="entry name" value="clpP"/>
    <property type="match status" value="1"/>
</dbReference>
<dbReference type="NCBIfam" id="NF001368">
    <property type="entry name" value="PRK00277.1"/>
    <property type="match status" value="1"/>
</dbReference>
<dbReference type="NCBIfam" id="NF009205">
    <property type="entry name" value="PRK12553.1"/>
    <property type="match status" value="1"/>
</dbReference>
<dbReference type="PANTHER" id="PTHR10381">
    <property type="entry name" value="ATP-DEPENDENT CLP PROTEASE PROTEOLYTIC SUBUNIT"/>
    <property type="match status" value="1"/>
</dbReference>
<dbReference type="PANTHER" id="PTHR10381:SF70">
    <property type="entry name" value="ATP-DEPENDENT CLP PROTEASE PROTEOLYTIC SUBUNIT"/>
    <property type="match status" value="1"/>
</dbReference>
<dbReference type="Pfam" id="PF00574">
    <property type="entry name" value="CLP_protease"/>
    <property type="match status" value="1"/>
</dbReference>
<dbReference type="PRINTS" id="PR00127">
    <property type="entry name" value="CLPPROTEASEP"/>
</dbReference>
<dbReference type="SUPFAM" id="SSF52096">
    <property type="entry name" value="ClpP/crotonase"/>
    <property type="match status" value="1"/>
</dbReference>
<dbReference type="PROSITE" id="PS00382">
    <property type="entry name" value="CLP_PROTEASE_HIS"/>
    <property type="match status" value="1"/>
</dbReference>
<gene>
    <name evidence="1" type="primary">clpP</name>
    <name type="ordered locus">HD_0221</name>
</gene>
<protein>
    <recommendedName>
        <fullName evidence="1">ATP-dependent Clp protease proteolytic subunit</fullName>
        <ecNumber evidence="1">3.4.21.92</ecNumber>
    </recommendedName>
    <alternativeName>
        <fullName evidence="1">Endopeptidase Clp</fullName>
    </alternativeName>
</protein>
<organism>
    <name type="scientific">Haemophilus ducreyi (strain 35000HP / ATCC 700724)</name>
    <dbReference type="NCBI Taxonomy" id="233412"/>
    <lineage>
        <taxon>Bacteria</taxon>
        <taxon>Pseudomonadati</taxon>
        <taxon>Pseudomonadota</taxon>
        <taxon>Gammaproteobacteria</taxon>
        <taxon>Pasteurellales</taxon>
        <taxon>Pasteurellaceae</taxon>
        <taxon>Haemophilus</taxon>
    </lineage>
</organism>
<reference key="1">
    <citation type="submission" date="2003-06" db="EMBL/GenBank/DDBJ databases">
        <title>The complete genome sequence of Haemophilus ducreyi.</title>
        <authorList>
            <person name="Munson R.S. Jr."/>
            <person name="Ray W.C."/>
            <person name="Mahairas G."/>
            <person name="Sabo P."/>
            <person name="Mungur R."/>
            <person name="Johnson L."/>
            <person name="Nguyen D."/>
            <person name="Wang J."/>
            <person name="Forst C."/>
            <person name="Hood L."/>
        </authorList>
    </citation>
    <scope>NUCLEOTIDE SEQUENCE [LARGE SCALE GENOMIC DNA]</scope>
    <source>
        <strain>35000HP / ATCC 700724</strain>
    </source>
</reference>
<sequence length="197" mass="21616">MAVIPMVVEQTSKGERSYDIYSRLLKERIIFLNGEVEDHMANLIVAQLLFLEAEDPEKDIYLYINSPGGVVTAGLAIYDTMNFIKPDVATLCTGQACSMGAFLLSGGKKGKRFALPNARVMIHQPLGGARGQATDIQIQAQEILKLKEMLTRKMAEHSGQTFAKVAADTERDNFMSATEAKNYGLIDKVLTSRGEVA</sequence>
<name>CLPP_HAEDU</name>